<gene>
    <name type="ordered locus">At1g77710</name>
    <name type="ORF">T32E8.4</name>
</gene>
<name>UFM1_ARATH</name>
<protein>
    <recommendedName>
        <fullName>Ubiquitin-fold modifier 1</fullName>
    </recommendedName>
</protein>
<comment type="function">
    <text evidence="1">Ubiquitin-like modifier protein which binds to a number of as yet unidentified target proteins.</text>
</comment>
<comment type="interaction">
    <interactant intactId="EBI-4439204">
        <id>Q9CA23</id>
    </interactant>
    <interactant intactId="EBI-25506855">
        <id>O23160</id>
        <label>MYB73</label>
    </interactant>
    <organismsDiffer>false</organismsDiffer>
    <experiments>3</experiments>
</comment>
<comment type="similarity">
    <text evidence="3">Belongs to the UFM1 family.</text>
</comment>
<proteinExistence type="evidence at protein level"/>
<keyword id="KW-1017">Isopeptide bond</keyword>
<keyword id="KW-1185">Reference proteome</keyword>
<keyword id="KW-0833">Ubl conjugation pathway</keyword>
<evidence type="ECO:0000250" key="1"/>
<evidence type="ECO:0000255" key="2"/>
<evidence type="ECO:0000305" key="3"/>
<sequence length="93" mass="9929">MATGGKVSFKVTLTSDPKLPFKVFSVPEGAPFTAVLKFAAEEFKVPPQTSAIITNDGIGINPQQSAGNVFLKHGSELRLIPRDRVGAVFVMDP</sequence>
<reference key="1">
    <citation type="journal article" date="2000" name="Nature">
        <title>Sequence and analysis of chromosome 1 of the plant Arabidopsis thaliana.</title>
        <authorList>
            <person name="Theologis A."/>
            <person name="Ecker J.R."/>
            <person name="Palm C.J."/>
            <person name="Federspiel N.A."/>
            <person name="Kaul S."/>
            <person name="White O."/>
            <person name="Alonso J."/>
            <person name="Altafi H."/>
            <person name="Araujo R."/>
            <person name="Bowman C.L."/>
            <person name="Brooks S.Y."/>
            <person name="Buehler E."/>
            <person name="Chan A."/>
            <person name="Chao Q."/>
            <person name="Chen H."/>
            <person name="Cheuk R.F."/>
            <person name="Chin C.W."/>
            <person name="Chung M.K."/>
            <person name="Conn L."/>
            <person name="Conway A.B."/>
            <person name="Conway A.R."/>
            <person name="Creasy T.H."/>
            <person name="Dewar K."/>
            <person name="Dunn P."/>
            <person name="Etgu P."/>
            <person name="Feldblyum T.V."/>
            <person name="Feng J.-D."/>
            <person name="Fong B."/>
            <person name="Fujii C.Y."/>
            <person name="Gill J.E."/>
            <person name="Goldsmith A.D."/>
            <person name="Haas B."/>
            <person name="Hansen N.F."/>
            <person name="Hughes B."/>
            <person name="Huizar L."/>
            <person name="Hunter J.L."/>
            <person name="Jenkins J."/>
            <person name="Johnson-Hopson C."/>
            <person name="Khan S."/>
            <person name="Khaykin E."/>
            <person name="Kim C.J."/>
            <person name="Koo H.L."/>
            <person name="Kremenetskaia I."/>
            <person name="Kurtz D.B."/>
            <person name="Kwan A."/>
            <person name="Lam B."/>
            <person name="Langin-Hooper S."/>
            <person name="Lee A."/>
            <person name="Lee J.M."/>
            <person name="Lenz C.A."/>
            <person name="Li J.H."/>
            <person name="Li Y.-P."/>
            <person name="Lin X."/>
            <person name="Liu S.X."/>
            <person name="Liu Z.A."/>
            <person name="Luros J.S."/>
            <person name="Maiti R."/>
            <person name="Marziali A."/>
            <person name="Militscher J."/>
            <person name="Miranda M."/>
            <person name="Nguyen M."/>
            <person name="Nierman W.C."/>
            <person name="Osborne B.I."/>
            <person name="Pai G."/>
            <person name="Peterson J."/>
            <person name="Pham P.K."/>
            <person name="Rizzo M."/>
            <person name="Rooney T."/>
            <person name="Rowley D."/>
            <person name="Sakano H."/>
            <person name="Salzberg S.L."/>
            <person name="Schwartz J.R."/>
            <person name="Shinn P."/>
            <person name="Southwick A.M."/>
            <person name="Sun H."/>
            <person name="Tallon L.J."/>
            <person name="Tambunga G."/>
            <person name="Toriumi M.J."/>
            <person name="Town C.D."/>
            <person name="Utterback T."/>
            <person name="Van Aken S."/>
            <person name="Vaysberg M."/>
            <person name="Vysotskaia V.S."/>
            <person name="Walker M."/>
            <person name="Wu D."/>
            <person name="Yu G."/>
            <person name="Fraser C.M."/>
            <person name="Venter J.C."/>
            <person name="Davis R.W."/>
        </authorList>
    </citation>
    <scope>NUCLEOTIDE SEQUENCE [LARGE SCALE GENOMIC DNA]</scope>
    <source>
        <strain>cv. Columbia</strain>
    </source>
</reference>
<reference key="2">
    <citation type="journal article" date="2017" name="Plant J.">
        <title>Araport11: a complete reannotation of the Arabidopsis thaliana reference genome.</title>
        <authorList>
            <person name="Cheng C.Y."/>
            <person name="Krishnakumar V."/>
            <person name="Chan A.P."/>
            <person name="Thibaud-Nissen F."/>
            <person name="Schobel S."/>
            <person name="Town C.D."/>
        </authorList>
    </citation>
    <scope>GENOME REANNOTATION</scope>
    <source>
        <strain>cv. Columbia</strain>
    </source>
</reference>
<reference key="3">
    <citation type="journal article" date="2003" name="Science">
        <title>Empirical analysis of transcriptional activity in the Arabidopsis genome.</title>
        <authorList>
            <person name="Yamada K."/>
            <person name="Lim J."/>
            <person name="Dale J.M."/>
            <person name="Chen H."/>
            <person name="Shinn P."/>
            <person name="Palm C.J."/>
            <person name="Southwick A.M."/>
            <person name="Wu H.C."/>
            <person name="Kim C.J."/>
            <person name="Nguyen M."/>
            <person name="Pham P.K."/>
            <person name="Cheuk R.F."/>
            <person name="Karlin-Newmann G."/>
            <person name="Liu S.X."/>
            <person name="Lam B."/>
            <person name="Sakano H."/>
            <person name="Wu T."/>
            <person name="Yu G."/>
            <person name="Miranda M."/>
            <person name="Quach H.L."/>
            <person name="Tripp M."/>
            <person name="Chang C.H."/>
            <person name="Lee J.M."/>
            <person name="Toriumi M.J."/>
            <person name="Chan M.M."/>
            <person name="Tang C.C."/>
            <person name="Onodera C.S."/>
            <person name="Deng J.M."/>
            <person name="Akiyama K."/>
            <person name="Ansari Y."/>
            <person name="Arakawa T."/>
            <person name="Banh J."/>
            <person name="Banno F."/>
            <person name="Bowser L."/>
            <person name="Brooks S.Y."/>
            <person name="Carninci P."/>
            <person name="Chao Q."/>
            <person name="Choy N."/>
            <person name="Enju A."/>
            <person name="Goldsmith A.D."/>
            <person name="Gurjal M."/>
            <person name="Hansen N.F."/>
            <person name="Hayashizaki Y."/>
            <person name="Johnson-Hopson C."/>
            <person name="Hsuan V.W."/>
            <person name="Iida K."/>
            <person name="Karnes M."/>
            <person name="Khan S."/>
            <person name="Koesema E."/>
            <person name="Ishida J."/>
            <person name="Jiang P.X."/>
            <person name="Jones T."/>
            <person name="Kawai J."/>
            <person name="Kamiya A."/>
            <person name="Meyers C."/>
            <person name="Nakajima M."/>
            <person name="Narusaka M."/>
            <person name="Seki M."/>
            <person name="Sakurai T."/>
            <person name="Satou M."/>
            <person name="Tamse R."/>
            <person name="Vaysberg M."/>
            <person name="Wallender E.K."/>
            <person name="Wong C."/>
            <person name="Yamamura Y."/>
            <person name="Yuan S."/>
            <person name="Shinozaki K."/>
            <person name="Davis R.W."/>
            <person name="Theologis A."/>
            <person name="Ecker J.R."/>
        </authorList>
    </citation>
    <scope>NUCLEOTIDE SEQUENCE [LARGE SCALE MRNA]</scope>
    <source>
        <strain>cv. Columbia</strain>
    </source>
</reference>
<organism>
    <name type="scientific">Arabidopsis thaliana</name>
    <name type="common">Mouse-ear cress</name>
    <dbReference type="NCBI Taxonomy" id="3702"/>
    <lineage>
        <taxon>Eukaryota</taxon>
        <taxon>Viridiplantae</taxon>
        <taxon>Streptophyta</taxon>
        <taxon>Embryophyta</taxon>
        <taxon>Tracheophyta</taxon>
        <taxon>Spermatophyta</taxon>
        <taxon>Magnoliopsida</taxon>
        <taxon>eudicotyledons</taxon>
        <taxon>Gunneridae</taxon>
        <taxon>Pentapetalae</taxon>
        <taxon>rosids</taxon>
        <taxon>malvids</taxon>
        <taxon>Brassicales</taxon>
        <taxon>Brassicaceae</taxon>
        <taxon>Camelineae</taxon>
        <taxon>Arabidopsis</taxon>
    </lineage>
</organism>
<accession>Q9CA23</accession>
<feature type="chain" id="PRO_0000042142" description="Ubiquitin-fold modifier 1">
    <location>
        <begin position="1"/>
        <end position="86"/>
    </location>
</feature>
<feature type="propeptide" id="PRO_0000042143" description="Removed in mature form" evidence="1">
    <location>
        <begin position="87"/>
        <end position="93"/>
    </location>
</feature>
<feature type="cross-link" description="Glycyl lysine isopeptide (Gly-Lys) (interchain with K-? in acceptor proteins)" evidence="2">
    <location>
        <position position="86"/>
    </location>
</feature>
<dbReference type="EMBL" id="AC012193">
    <property type="protein sequence ID" value="AAG51633.1"/>
    <property type="molecule type" value="Genomic_DNA"/>
</dbReference>
<dbReference type="EMBL" id="CP002684">
    <property type="protein sequence ID" value="AEE36012.1"/>
    <property type="molecule type" value="Genomic_DNA"/>
</dbReference>
<dbReference type="EMBL" id="AY093089">
    <property type="protein sequence ID" value="AAM13088.1"/>
    <property type="molecule type" value="mRNA"/>
</dbReference>
<dbReference type="EMBL" id="BT000097">
    <property type="protein sequence ID" value="AAN15416.1"/>
    <property type="molecule type" value="mRNA"/>
</dbReference>
<dbReference type="PIR" id="H96806">
    <property type="entry name" value="H96806"/>
</dbReference>
<dbReference type="SMR" id="Q9CA23"/>
<dbReference type="BioGRID" id="29326">
    <property type="interactions" value="3"/>
</dbReference>
<dbReference type="FunCoup" id="Q9CA23">
    <property type="interactions" value="2688"/>
</dbReference>
<dbReference type="IntAct" id="Q9CA23">
    <property type="interactions" value="3"/>
</dbReference>
<dbReference type="STRING" id="3702.Q9CA23"/>
<dbReference type="PaxDb" id="3702-AT1G77710.1"/>
<dbReference type="ProteomicsDB" id="245293"/>
<dbReference type="EnsemblPlants" id="AT1G77710.1">
    <property type="protein sequence ID" value="AT1G77710.1"/>
    <property type="gene ID" value="AT1G77710"/>
</dbReference>
<dbReference type="GeneID" id="844107"/>
<dbReference type="Gramene" id="AT1G77710.1">
    <property type="protein sequence ID" value="AT1G77710.1"/>
    <property type="gene ID" value="AT1G77710"/>
</dbReference>
<dbReference type="KEGG" id="ath:AT1G77710"/>
<dbReference type="Araport" id="AT1G77710"/>
<dbReference type="TAIR" id="AT1G77710">
    <property type="gene designation" value="CCP2"/>
</dbReference>
<dbReference type="eggNOG" id="KOG3483">
    <property type="taxonomic scope" value="Eukaryota"/>
</dbReference>
<dbReference type="HOGENOM" id="CLU_175114_0_0_1"/>
<dbReference type="InParanoid" id="Q9CA23"/>
<dbReference type="OMA" id="MEHAVGK"/>
<dbReference type="OrthoDB" id="284357at2759"/>
<dbReference type="PhylomeDB" id="Q9CA23"/>
<dbReference type="PRO" id="PR:Q9CA23"/>
<dbReference type="Proteomes" id="UP000006548">
    <property type="component" value="Chromosome 1"/>
</dbReference>
<dbReference type="ExpressionAtlas" id="Q9CA23">
    <property type="expression patterns" value="baseline and differential"/>
</dbReference>
<dbReference type="GO" id="GO:0005829">
    <property type="term" value="C:cytosol"/>
    <property type="evidence" value="ECO:0007005"/>
    <property type="project" value="TAIR"/>
</dbReference>
<dbReference type="GO" id="GO:0071569">
    <property type="term" value="P:protein ufmylation"/>
    <property type="evidence" value="ECO:0007669"/>
    <property type="project" value="InterPro"/>
</dbReference>
<dbReference type="CDD" id="cd01766">
    <property type="entry name" value="Ubl_UFM1"/>
    <property type="match status" value="1"/>
</dbReference>
<dbReference type="FunFam" id="3.10.20.90:FF:000044">
    <property type="entry name" value="Ubiquitin-fold modifier 1"/>
    <property type="match status" value="1"/>
</dbReference>
<dbReference type="Gene3D" id="3.10.20.90">
    <property type="entry name" value="Phosphatidylinositol 3-kinase Catalytic Subunit, Chain A, domain 1"/>
    <property type="match status" value="1"/>
</dbReference>
<dbReference type="InterPro" id="IPR029071">
    <property type="entry name" value="Ubiquitin-like_domsf"/>
</dbReference>
<dbReference type="InterPro" id="IPR005375">
    <property type="entry name" value="UFM1"/>
</dbReference>
<dbReference type="PANTHER" id="PTHR15825">
    <property type="entry name" value="UBIQUITIN-FOLD MODIFIER 1"/>
    <property type="match status" value="1"/>
</dbReference>
<dbReference type="PANTHER" id="PTHR15825:SF0">
    <property type="entry name" value="UBIQUITIN-FOLD MODIFIER 1"/>
    <property type="match status" value="1"/>
</dbReference>
<dbReference type="Pfam" id="PF03671">
    <property type="entry name" value="Ufm1"/>
    <property type="match status" value="1"/>
</dbReference>
<dbReference type="PIRSF" id="PIRSF038027">
    <property type="entry name" value="Ubiquitin-like_Ufm1"/>
    <property type="match status" value="1"/>
</dbReference>
<dbReference type="SUPFAM" id="SSF54236">
    <property type="entry name" value="Ubiquitin-like"/>
    <property type="match status" value="1"/>
</dbReference>